<comment type="function">
    <text evidence="1">Catalyzes the hydrolytic cleavage of the carbon-nitrogen bond in imidazolone-5-propanoate to yield N-formimidoyl-L-glutamate. It is the third step in the universal histidine degradation pathway.</text>
</comment>
<comment type="catalytic activity">
    <reaction evidence="1">
        <text>4-imidazolone-5-propanoate + H2O = N-formimidoyl-L-glutamate</text>
        <dbReference type="Rhea" id="RHEA:23660"/>
        <dbReference type="ChEBI" id="CHEBI:15377"/>
        <dbReference type="ChEBI" id="CHEBI:58928"/>
        <dbReference type="ChEBI" id="CHEBI:77893"/>
        <dbReference type="EC" id="3.5.2.7"/>
    </reaction>
</comment>
<comment type="cofactor">
    <cofactor evidence="1">
        <name>Zn(2+)</name>
        <dbReference type="ChEBI" id="CHEBI:29105"/>
    </cofactor>
    <cofactor evidence="1">
        <name>Fe(3+)</name>
        <dbReference type="ChEBI" id="CHEBI:29034"/>
    </cofactor>
    <text evidence="1">Binds 1 zinc or iron ion per subunit.</text>
</comment>
<comment type="pathway">
    <text evidence="1">Amino-acid degradation; L-histidine degradation into L-glutamate; N-formimidoyl-L-glutamate from L-histidine: step 3/3.</text>
</comment>
<comment type="subcellular location">
    <subcellularLocation>
        <location evidence="1">Cytoplasm</location>
    </subcellularLocation>
</comment>
<comment type="similarity">
    <text evidence="1">Belongs to the metallo-dependent hydrolases superfamily. HutI family.</text>
</comment>
<organism>
    <name type="scientific">Salinispora tropica (strain ATCC BAA-916 / DSM 44818 / JCM 13857 / NBRC 105044 / CNB-440)</name>
    <dbReference type="NCBI Taxonomy" id="369723"/>
    <lineage>
        <taxon>Bacteria</taxon>
        <taxon>Bacillati</taxon>
        <taxon>Actinomycetota</taxon>
        <taxon>Actinomycetes</taxon>
        <taxon>Micromonosporales</taxon>
        <taxon>Micromonosporaceae</taxon>
        <taxon>Salinispora</taxon>
    </lineage>
</organism>
<keyword id="KW-0963">Cytoplasm</keyword>
<keyword id="KW-0369">Histidine metabolism</keyword>
<keyword id="KW-0378">Hydrolase</keyword>
<keyword id="KW-0408">Iron</keyword>
<keyword id="KW-0479">Metal-binding</keyword>
<keyword id="KW-1185">Reference proteome</keyword>
<keyword id="KW-0862">Zinc</keyword>
<name>HUTI_SALTO</name>
<gene>
    <name evidence="1" type="primary">hutI</name>
    <name type="ordered locus">Strop_1107</name>
</gene>
<sequence>MSSLLLDNIGELVTNTAAGEGPLGIHRDAAVLVEDGVVAWVGPNGSAPAADRRIDAESAAVLPGFVDSHAHLVFAGDRAVEFAARMAGQPYTGGGIRTTVGATRAATDDELRATAHRLHAEALRQGTTTIEIKSGYGLTVVDEARSLRIAAEVSSETTFLGAHLVPAEYADRPDDYVDLVCGPMLAAAAPYARWVDVFCERGAFDADHTRAILTRGQAAGLGTRLHANQLGPGPGVQLGVELGVASVDHCTHLTDADVDALAGADGATVATLLPGAEFSTRSPYPDARRLLDAGVTVALATDCNPGSSYTSSVPFCIALAVREMRMSPSEAVWAATAGGAAALRRTDVGRLAPGSQADLMILDAPSHLHLAYRPGIPLIRQVLHNGVPQCRP</sequence>
<proteinExistence type="inferred from homology"/>
<reference key="1">
    <citation type="journal article" date="2007" name="Proc. Natl. Acad. Sci. U.S.A.">
        <title>Genome sequencing reveals complex secondary metabolome in the marine actinomycete Salinispora tropica.</title>
        <authorList>
            <person name="Udwary D.W."/>
            <person name="Zeigler L."/>
            <person name="Asolkar R.N."/>
            <person name="Singan V."/>
            <person name="Lapidus A."/>
            <person name="Fenical W."/>
            <person name="Jensen P.R."/>
            <person name="Moore B.S."/>
        </authorList>
    </citation>
    <scope>NUCLEOTIDE SEQUENCE [LARGE SCALE GENOMIC DNA]</scope>
    <source>
        <strain>ATCC BAA-916 / DSM 44818 / JCM 13857 / NBRC 105044 / CNB-440</strain>
    </source>
</reference>
<feature type="chain" id="PRO_1000079827" description="Imidazolonepropionase">
    <location>
        <begin position="1"/>
        <end position="392"/>
    </location>
</feature>
<feature type="binding site" evidence="1">
    <location>
        <position position="69"/>
    </location>
    <ligand>
        <name>Fe(3+)</name>
        <dbReference type="ChEBI" id="CHEBI:29034"/>
    </ligand>
</feature>
<feature type="binding site" evidence="1">
    <location>
        <position position="69"/>
    </location>
    <ligand>
        <name>Zn(2+)</name>
        <dbReference type="ChEBI" id="CHEBI:29105"/>
    </ligand>
</feature>
<feature type="binding site" evidence="1">
    <location>
        <position position="71"/>
    </location>
    <ligand>
        <name>Fe(3+)</name>
        <dbReference type="ChEBI" id="CHEBI:29034"/>
    </ligand>
</feature>
<feature type="binding site" evidence="1">
    <location>
        <position position="71"/>
    </location>
    <ligand>
        <name>Zn(2+)</name>
        <dbReference type="ChEBI" id="CHEBI:29105"/>
    </ligand>
</feature>
<feature type="binding site" evidence="1">
    <location>
        <position position="78"/>
    </location>
    <ligand>
        <name>4-imidazolone-5-propanoate</name>
        <dbReference type="ChEBI" id="CHEBI:77893"/>
    </ligand>
</feature>
<feature type="binding site" evidence="1">
    <location>
        <position position="136"/>
    </location>
    <ligand>
        <name>4-imidazolone-5-propanoate</name>
        <dbReference type="ChEBI" id="CHEBI:77893"/>
    </ligand>
</feature>
<feature type="binding site" evidence="1">
    <location>
        <position position="136"/>
    </location>
    <ligand>
        <name>N-formimidoyl-L-glutamate</name>
        <dbReference type="ChEBI" id="CHEBI:58928"/>
    </ligand>
</feature>
<feature type="binding site" evidence="1">
    <location>
        <position position="163"/>
    </location>
    <ligand>
        <name>4-imidazolone-5-propanoate</name>
        <dbReference type="ChEBI" id="CHEBI:77893"/>
    </ligand>
</feature>
<feature type="binding site" evidence="1">
    <location>
        <position position="226"/>
    </location>
    <ligand>
        <name>Fe(3+)</name>
        <dbReference type="ChEBI" id="CHEBI:29034"/>
    </ligand>
</feature>
<feature type="binding site" evidence="1">
    <location>
        <position position="226"/>
    </location>
    <ligand>
        <name>Zn(2+)</name>
        <dbReference type="ChEBI" id="CHEBI:29105"/>
    </ligand>
</feature>
<feature type="binding site" evidence="1">
    <location>
        <position position="229"/>
    </location>
    <ligand>
        <name>4-imidazolone-5-propanoate</name>
        <dbReference type="ChEBI" id="CHEBI:77893"/>
    </ligand>
</feature>
<feature type="binding site" evidence="1">
    <location>
        <position position="302"/>
    </location>
    <ligand>
        <name>Fe(3+)</name>
        <dbReference type="ChEBI" id="CHEBI:29034"/>
    </ligand>
</feature>
<feature type="binding site" evidence="1">
    <location>
        <position position="302"/>
    </location>
    <ligand>
        <name>Zn(2+)</name>
        <dbReference type="ChEBI" id="CHEBI:29105"/>
    </ligand>
</feature>
<feature type="binding site" evidence="1">
    <location>
        <position position="304"/>
    </location>
    <ligand>
        <name>N-formimidoyl-L-glutamate</name>
        <dbReference type="ChEBI" id="CHEBI:58928"/>
    </ligand>
</feature>
<feature type="binding site" evidence="1">
    <location>
        <position position="306"/>
    </location>
    <ligand>
        <name>N-formimidoyl-L-glutamate</name>
        <dbReference type="ChEBI" id="CHEBI:58928"/>
    </ligand>
</feature>
<feature type="binding site" evidence="1">
    <location>
        <position position="307"/>
    </location>
    <ligand>
        <name>4-imidazolone-5-propanoate</name>
        <dbReference type="ChEBI" id="CHEBI:77893"/>
    </ligand>
</feature>
<dbReference type="EC" id="3.5.2.7" evidence="1"/>
<dbReference type="EMBL" id="CP000667">
    <property type="protein sequence ID" value="ABP53578.1"/>
    <property type="molecule type" value="Genomic_DNA"/>
</dbReference>
<dbReference type="RefSeq" id="WP_011905010.1">
    <property type="nucleotide sequence ID" value="NC_009380.1"/>
</dbReference>
<dbReference type="SMR" id="A4X3X8"/>
<dbReference type="STRING" id="369723.Strop_1107"/>
<dbReference type="KEGG" id="stp:Strop_1107"/>
<dbReference type="PATRIC" id="fig|369723.5.peg.1129"/>
<dbReference type="eggNOG" id="COG1228">
    <property type="taxonomic scope" value="Bacteria"/>
</dbReference>
<dbReference type="HOGENOM" id="CLU_041647_1_0_11"/>
<dbReference type="UniPathway" id="UPA00379">
    <property type="reaction ID" value="UER00551"/>
</dbReference>
<dbReference type="Proteomes" id="UP000000235">
    <property type="component" value="Chromosome"/>
</dbReference>
<dbReference type="GO" id="GO:0005737">
    <property type="term" value="C:cytoplasm"/>
    <property type="evidence" value="ECO:0007669"/>
    <property type="project" value="UniProtKB-SubCell"/>
</dbReference>
<dbReference type="GO" id="GO:0050480">
    <property type="term" value="F:imidazolonepropionase activity"/>
    <property type="evidence" value="ECO:0007669"/>
    <property type="project" value="UniProtKB-UniRule"/>
</dbReference>
<dbReference type="GO" id="GO:0005506">
    <property type="term" value="F:iron ion binding"/>
    <property type="evidence" value="ECO:0007669"/>
    <property type="project" value="UniProtKB-UniRule"/>
</dbReference>
<dbReference type="GO" id="GO:0008270">
    <property type="term" value="F:zinc ion binding"/>
    <property type="evidence" value="ECO:0007669"/>
    <property type="project" value="UniProtKB-UniRule"/>
</dbReference>
<dbReference type="GO" id="GO:0019556">
    <property type="term" value="P:L-histidine catabolic process to glutamate and formamide"/>
    <property type="evidence" value="ECO:0007669"/>
    <property type="project" value="UniProtKB-UniPathway"/>
</dbReference>
<dbReference type="GO" id="GO:0019557">
    <property type="term" value="P:L-histidine catabolic process to glutamate and formate"/>
    <property type="evidence" value="ECO:0007669"/>
    <property type="project" value="UniProtKB-UniPathway"/>
</dbReference>
<dbReference type="Gene3D" id="3.20.20.140">
    <property type="entry name" value="Metal-dependent hydrolases"/>
    <property type="match status" value="1"/>
</dbReference>
<dbReference type="Gene3D" id="2.30.40.10">
    <property type="entry name" value="Urease, subunit C, domain 1"/>
    <property type="match status" value="1"/>
</dbReference>
<dbReference type="HAMAP" id="MF_00372">
    <property type="entry name" value="HutI"/>
    <property type="match status" value="1"/>
</dbReference>
<dbReference type="InterPro" id="IPR006680">
    <property type="entry name" value="Amidohydro-rel"/>
</dbReference>
<dbReference type="InterPro" id="IPR005920">
    <property type="entry name" value="HutI"/>
</dbReference>
<dbReference type="InterPro" id="IPR011059">
    <property type="entry name" value="Metal-dep_hydrolase_composite"/>
</dbReference>
<dbReference type="InterPro" id="IPR032466">
    <property type="entry name" value="Metal_Hydrolase"/>
</dbReference>
<dbReference type="NCBIfam" id="TIGR01224">
    <property type="entry name" value="hutI"/>
    <property type="match status" value="1"/>
</dbReference>
<dbReference type="PANTHER" id="PTHR42752">
    <property type="entry name" value="IMIDAZOLONEPROPIONASE"/>
    <property type="match status" value="1"/>
</dbReference>
<dbReference type="PANTHER" id="PTHR42752:SF1">
    <property type="entry name" value="IMIDAZOLONEPROPIONASE-RELATED"/>
    <property type="match status" value="1"/>
</dbReference>
<dbReference type="Pfam" id="PF01979">
    <property type="entry name" value="Amidohydro_1"/>
    <property type="match status" value="1"/>
</dbReference>
<dbReference type="SUPFAM" id="SSF51338">
    <property type="entry name" value="Composite domain of metallo-dependent hydrolases"/>
    <property type="match status" value="1"/>
</dbReference>
<dbReference type="SUPFAM" id="SSF51556">
    <property type="entry name" value="Metallo-dependent hydrolases"/>
    <property type="match status" value="1"/>
</dbReference>
<protein>
    <recommendedName>
        <fullName evidence="1">Imidazolonepropionase</fullName>
        <ecNumber evidence="1">3.5.2.7</ecNumber>
    </recommendedName>
    <alternativeName>
        <fullName evidence="1">Imidazolone-5-propionate hydrolase</fullName>
    </alternativeName>
</protein>
<accession>A4X3X8</accession>
<evidence type="ECO:0000255" key="1">
    <source>
        <dbReference type="HAMAP-Rule" id="MF_00372"/>
    </source>
</evidence>